<organism>
    <name type="scientific">Corynebacterium efficiens (strain DSM 44549 / YS-314 / AJ 12310 / JCM 11189 / NBRC 100395)</name>
    <dbReference type="NCBI Taxonomy" id="196164"/>
    <lineage>
        <taxon>Bacteria</taxon>
        <taxon>Bacillati</taxon>
        <taxon>Actinomycetota</taxon>
        <taxon>Actinomycetes</taxon>
        <taxon>Mycobacteriales</taxon>
        <taxon>Corynebacteriaceae</taxon>
        <taxon>Corynebacterium</taxon>
    </lineage>
</organism>
<name>RL11_COREF</name>
<dbReference type="EMBL" id="BA000035">
    <property type="protein sequence ID" value="BAC17297.1"/>
    <property type="status" value="ALT_INIT"/>
    <property type="molecule type" value="Genomic_DNA"/>
</dbReference>
<dbReference type="RefSeq" id="WP_006770276.1">
    <property type="nucleotide sequence ID" value="NC_004369.1"/>
</dbReference>
<dbReference type="SMR" id="Q8FSA7"/>
<dbReference type="STRING" id="196164.gene:10740889"/>
<dbReference type="KEGG" id="cef:CE0487"/>
<dbReference type="eggNOG" id="COG0080">
    <property type="taxonomic scope" value="Bacteria"/>
</dbReference>
<dbReference type="HOGENOM" id="CLU_074237_2_1_11"/>
<dbReference type="OrthoDB" id="9802408at2"/>
<dbReference type="Proteomes" id="UP000001409">
    <property type="component" value="Chromosome"/>
</dbReference>
<dbReference type="GO" id="GO:0022625">
    <property type="term" value="C:cytosolic large ribosomal subunit"/>
    <property type="evidence" value="ECO:0007669"/>
    <property type="project" value="TreeGrafter"/>
</dbReference>
<dbReference type="GO" id="GO:0070180">
    <property type="term" value="F:large ribosomal subunit rRNA binding"/>
    <property type="evidence" value="ECO:0007669"/>
    <property type="project" value="UniProtKB-UniRule"/>
</dbReference>
<dbReference type="GO" id="GO:0003735">
    <property type="term" value="F:structural constituent of ribosome"/>
    <property type="evidence" value="ECO:0007669"/>
    <property type="project" value="InterPro"/>
</dbReference>
<dbReference type="GO" id="GO:0006412">
    <property type="term" value="P:translation"/>
    <property type="evidence" value="ECO:0007669"/>
    <property type="project" value="UniProtKB-UniRule"/>
</dbReference>
<dbReference type="CDD" id="cd00349">
    <property type="entry name" value="Ribosomal_L11"/>
    <property type="match status" value="1"/>
</dbReference>
<dbReference type="FunFam" id="1.10.10.250:FF:000001">
    <property type="entry name" value="50S ribosomal protein L11"/>
    <property type="match status" value="1"/>
</dbReference>
<dbReference type="FunFam" id="3.30.1550.10:FF:000001">
    <property type="entry name" value="50S ribosomal protein L11"/>
    <property type="match status" value="1"/>
</dbReference>
<dbReference type="Gene3D" id="1.10.10.250">
    <property type="entry name" value="Ribosomal protein L11, C-terminal domain"/>
    <property type="match status" value="1"/>
</dbReference>
<dbReference type="Gene3D" id="3.30.1550.10">
    <property type="entry name" value="Ribosomal protein L11/L12, N-terminal domain"/>
    <property type="match status" value="1"/>
</dbReference>
<dbReference type="HAMAP" id="MF_00736">
    <property type="entry name" value="Ribosomal_uL11"/>
    <property type="match status" value="1"/>
</dbReference>
<dbReference type="InterPro" id="IPR000911">
    <property type="entry name" value="Ribosomal_uL11"/>
</dbReference>
<dbReference type="InterPro" id="IPR006519">
    <property type="entry name" value="Ribosomal_uL11_bac-typ"/>
</dbReference>
<dbReference type="InterPro" id="IPR020783">
    <property type="entry name" value="Ribosomal_uL11_C"/>
</dbReference>
<dbReference type="InterPro" id="IPR036769">
    <property type="entry name" value="Ribosomal_uL11_C_sf"/>
</dbReference>
<dbReference type="InterPro" id="IPR020785">
    <property type="entry name" value="Ribosomal_uL11_CS"/>
</dbReference>
<dbReference type="InterPro" id="IPR020784">
    <property type="entry name" value="Ribosomal_uL11_N"/>
</dbReference>
<dbReference type="InterPro" id="IPR036796">
    <property type="entry name" value="Ribosomal_uL11_N_sf"/>
</dbReference>
<dbReference type="NCBIfam" id="TIGR01632">
    <property type="entry name" value="L11_bact"/>
    <property type="match status" value="1"/>
</dbReference>
<dbReference type="PANTHER" id="PTHR11661">
    <property type="entry name" value="60S RIBOSOMAL PROTEIN L12"/>
    <property type="match status" value="1"/>
</dbReference>
<dbReference type="PANTHER" id="PTHR11661:SF1">
    <property type="entry name" value="LARGE RIBOSOMAL SUBUNIT PROTEIN UL11M"/>
    <property type="match status" value="1"/>
</dbReference>
<dbReference type="Pfam" id="PF00298">
    <property type="entry name" value="Ribosomal_L11"/>
    <property type="match status" value="1"/>
</dbReference>
<dbReference type="Pfam" id="PF03946">
    <property type="entry name" value="Ribosomal_L11_N"/>
    <property type="match status" value="1"/>
</dbReference>
<dbReference type="SMART" id="SM00649">
    <property type="entry name" value="RL11"/>
    <property type="match status" value="1"/>
</dbReference>
<dbReference type="SUPFAM" id="SSF54747">
    <property type="entry name" value="Ribosomal L11/L12e N-terminal domain"/>
    <property type="match status" value="1"/>
</dbReference>
<dbReference type="SUPFAM" id="SSF46906">
    <property type="entry name" value="Ribosomal protein L11, C-terminal domain"/>
    <property type="match status" value="1"/>
</dbReference>
<dbReference type="PROSITE" id="PS00359">
    <property type="entry name" value="RIBOSOMAL_L11"/>
    <property type="match status" value="1"/>
</dbReference>
<comment type="function">
    <text evidence="1">Forms part of the ribosomal stalk which helps the ribosome interact with GTP-bound translation factors.</text>
</comment>
<comment type="subunit">
    <text evidence="1">Part of the ribosomal stalk of the 50S ribosomal subunit. Interacts with L10 and the large rRNA to form the base of the stalk. L10 forms an elongated spine to which L12 dimers bind in a sequential fashion forming a multimeric L10(L12)X complex.</text>
</comment>
<comment type="PTM">
    <text evidence="1">One or more lysine residues are methylated.</text>
</comment>
<comment type="similarity">
    <text evidence="1">Belongs to the universal ribosomal protein uL11 family.</text>
</comment>
<comment type="sequence caution" evidence="2">
    <conflict type="erroneous initiation">
        <sequence resource="EMBL-CDS" id="BAC17297"/>
    </conflict>
</comment>
<proteinExistence type="inferred from homology"/>
<feature type="chain" id="PRO_0000104277" description="Large ribosomal subunit protein uL11">
    <location>
        <begin position="1"/>
        <end position="144"/>
    </location>
</feature>
<gene>
    <name evidence="1" type="primary">rplK</name>
    <name type="ordered locus">CE0487</name>
</gene>
<keyword id="KW-0488">Methylation</keyword>
<keyword id="KW-1185">Reference proteome</keyword>
<keyword id="KW-0687">Ribonucleoprotein</keyword>
<keyword id="KW-0689">Ribosomal protein</keyword>
<keyword id="KW-0694">RNA-binding</keyword>
<keyword id="KW-0699">rRNA-binding</keyword>
<sequence>MAPKKKKVTGLIKLQIQAGQANPAPPVGPALGAHGVNIMEFCKAYNAATENQRGNVVPVEITVYEDRSFDFKLKTPPAAKLLLKAAGLQKGSGVPHTNKVGKVTMDQIREIAETKKEDLNARDIDAAAKIIAGTARSMGITVEG</sequence>
<evidence type="ECO:0000255" key="1">
    <source>
        <dbReference type="HAMAP-Rule" id="MF_00736"/>
    </source>
</evidence>
<evidence type="ECO:0000305" key="2"/>
<accession>Q8FSA7</accession>
<reference key="1">
    <citation type="journal article" date="2003" name="Genome Res.">
        <title>Comparative complete genome sequence analysis of the amino acid replacements responsible for the thermostability of Corynebacterium efficiens.</title>
        <authorList>
            <person name="Nishio Y."/>
            <person name="Nakamura Y."/>
            <person name="Kawarabayasi Y."/>
            <person name="Usuda Y."/>
            <person name="Kimura E."/>
            <person name="Sugimoto S."/>
            <person name="Matsui K."/>
            <person name="Yamagishi A."/>
            <person name="Kikuchi H."/>
            <person name="Ikeo K."/>
            <person name="Gojobori T."/>
        </authorList>
    </citation>
    <scope>NUCLEOTIDE SEQUENCE [LARGE SCALE GENOMIC DNA]</scope>
    <source>
        <strain>DSM 44549 / YS-314 / AJ 12310 / JCM 11189 / NBRC 100395</strain>
    </source>
</reference>
<protein>
    <recommendedName>
        <fullName evidence="1">Large ribosomal subunit protein uL11</fullName>
    </recommendedName>
    <alternativeName>
        <fullName evidence="2">50S ribosomal protein L11</fullName>
    </alternativeName>
</protein>